<keyword id="KW-1003">Cell membrane</keyword>
<keyword id="KW-0472">Membrane</keyword>
<keyword id="KW-1185">Reference proteome</keyword>
<keyword id="KW-0812">Transmembrane</keyword>
<keyword id="KW-1133">Transmembrane helix</keyword>
<keyword id="KW-0813">Transport</keyword>
<comment type="subcellular location">
    <subcellularLocation>
        <location evidence="2">Cell membrane</location>
        <topology evidence="2">Multi-pass membrane protein</topology>
    </subcellularLocation>
</comment>
<comment type="similarity">
    <text evidence="2">Belongs to the major facilitator superfamily. TCR/Tet family.</text>
</comment>
<proteinExistence type="inferred from homology"/>
<dbReference type="EMBL" id="AF017113">
    <property type="protein sequence ID" value="AAC67266.1"/>
    <property type="molecule type" value="Genomic_DNA"/>
</dbReference>
<dbReference type="EMBL" id="AL009126">
    <property type="protein sequence ID" value="CAB15538.1"/>
    <property type="molecule type" value="Genomic_DNA"/>
</dbReference>
<dbReference type="PIR" id="G70042">
    <property type="entry name" value="G70042"/>
</dbReference>
<dbReference type="RefSeq" id="NP_391401.1">
    <property type="nucleotide sequence ID" value="NC_000964.3"/>
</dbReference>
<dbReference type="RefSeq" id="WP_003242625.1">
    <property type="nucleotide sequence ID" value="NZ_OZ025638.1"/>
</dbReference>
<dbReference type="SMR" id="O34502"/>
<dbReference type="FunCoup" id="O34502">
    <property type="interactions" value="14"/>
</dbReference>
<dbReference type="STRING" id="224308.BSU35210"/>
<dbReference type="PaxDb" id="224308-BSU35210"/>
<dbReference type="EnsemblBacteria" id="CAB15538">
    <property type="protein sequence ID" value="CAB15538"/>
    <property type="gene ID" value="BSU_35210"/>
</dbReference>
<dbReference type="GeneID" id="938566"/>
<dbReference type="KEGG" id="bsu:BSU35210"/>
<dbReference type="PATRIC" id="fig|224308.179.peg.3811"/>
<dbReference type="eggNOG" id="COG2814">
    <property type="taxonomic scope" value="Bacteria"/>
</dbReference>
<dbReference type="InParanoid" id="O34502"/>
<dbReference type="OrthoDB" id="102502at2"/>
<dbReference type="PhylomeDB" id="O34502"/>
<dbReference type="BioCyc" id="BSUB:BSU35210-MONOMER"/>
<dbReference type="Proteomes" id="UP000001570">
    <property type="component" value="Chromosome"/>
</dbReference>
<dbReference type="GO" id="GO:0005886">
    <property type="term" value="C:plasma membrane"/>
    <property type="evidence" value="ECO:0000318"/>
    <property type="project" value="GO_Central"/>
</dbReference>
<dbReference type="GO" id="GO:0022857">
    <property type="term" value="F:transmembrane transporter activity"/>
    <property type="evidence" value="ECO:0000318"/>
    <property type="project" value="GO_Central"/>
</dbReference>
<dbReference type="GO" id="GO:0055085">
    <property type="term" value="P:transmembrane transport"/>
    <property type="evidence" value="ECO:0000318"/>
    <property type="project" value="GO_Central"/>
</dbReference>
<dbReference type="CDD" id="cd17321">
    <property type="entry name" value="MFS_MMR_MDR_like"/>
    <property type="match status" value="1"/>
</dbReference>
<dbReference type="Gene3D" id="1.20.1250.20">
    <property type="entry name" value="MFS general substrate transporter like domains"/>
    <property type="match status" value="1"/>
</dbReference>
<dbReference type="Gene3D" id="1.20.1720.10">
    <property type="entry name" value="Multidrug resistance protein D"/>
    <property type="match status" value="1"/>
</dbReference>
<dbReference type="InterPro" id="IPR011701">
    <property type="entry name" value="MFS"/>
</dbReference>
<dbReference type="InterPro" id="IPR020846">
    <property type="entry name" value="MFS_dom"/>
</dbReference>
<dbReference type="InterPro" id="IPR036259">
    <property type="entry name" value="MFS_trans_sf"/>
</dbReference>
<dbReference type="PANTHER" id="PTHR42718:SF46">
    <property type="entry name" value="BLR6921 PROTEIN"/>
    <property type="match status" value="1"/>
</dbReference>
<dbReference type="PANTHER" id="PTHR42718">
    <property type="entry name" value="MAJOR FACILITATOR SUPERFAMILY MULTIDRUG TRANSPORTER MFSC"/>
    <property type="match status" value="1"/>
</dbReference>
<dbReference type="Pfam" id="PF07690">
    <property type="entry name" value="MFS_1"/>
    <property type="match status" value="2"/>
</dbReference>
<dbReference type="PRINTS" id="PR01036">
    <property type="entry name" value="TCRTETB"/>
</dbReference>
<dbReference type="SUPFAM" id="SSF103473">
    <property type="entry name" value="MFS general substrate transporter"/>
    <property type="match status" value="1"/>
</dbReference>
<dbReference type="PROSITE" id="PS50850">
    <property type="entry name" value="MFS"/>
    <property type="match status" value="1"/>
</dbReference>
<feature type="chain" id="PRO_0000351513" description="Uncharacterized MFS-type transporter YvkA">
    <location>
        <begin position="1"/>
        <end position="444"/>
    </location>
</feature>
<feature type="transmembrane region" description="Helical" evidence="1">
    <location>
        <begin position="9"/>
        <end position="29"/>
    </location>
</feature>
<feature type="transmembrane region" description="Helical" evidence="1">
    <location>
        <begin position="42"/>
        <end position="62"/>
    </location>
</feature>
<feature type="transmembrane region" description="Helical" evidence="1">
    <location>
        <begin position="82"/>
        <end position="102"/>
    </location>
</feature>
<feature type="transmembrane region" description="Helical" evidence="1">
    <location>
        <begin position="104"/>
        <end position="126"/>
    </location>
</feature>
<feature type="transmembrane region" description="Helical" evidence="1">
    <location>
        <begin position="136"/>
        <end position="156"/>
    </location>
</feature>
<feature type="transmembrane region" description="Helical" evidence="1">
    <location>
        <begin position="164"/>
        <end position="184"/>
    </location>
</feature>
<feature type="transmembrane region" description="Helical" evidence="1">
    <location>
        <begin position="193"/>
        <end position="213"/>
    </location>
</feature>
<feature type="transmembrane region" description="Helical" evidence="1">
    <location>
        <begin position="217"/>
        <end position="237"/>
    </location>
</feature>
<feature type="transmembrane region" description="Helical" evidence="1">
    <location>
        <begin position="263"/>
        <end position="283"/>
    </location>
</feature>
<feature type="transmembrane region" description="Helical" evidence="1">
    <location>
        <begin position="295"/>
        <end position="315"/>
    </location>
</feature>
<feature type="transmembrane region" description="Helical" evidence="1">
    <location>
        <begin position="324"/>
        <end position="344"/>
    </location>
</feature>
<feature type="transmembrane region" description="Helical" evidence="1">
    <location>
        <begin position="347"/>
        <end position="367"/>
    </location>
</feature>
<feature type="transmembrane region" description="Helical" evidence="1">
    <location>
        <begin position="387"/>
        <end position="407"/>
    </location>
</feature>
<feature type="transmembrane region" description="Helical" evidence="1">
    <location>
        <begin position="411"/>
        <end position="431"/>
    </location>
</feature>
<evidence type="ECO:0000255" key="1"/>
<evidence type="ECO:0000305" key="2"/>
<reference key="1">
    <citation type="submission" date="1997-11" db="EMBL/GenBank/DDBJ databases">
        <title>Nucleotide sequence of the 300-304 chromosomal segment of Bacillus subtilis.</title>
        <authorList>
            <person name="Lazarevic V."/>
            <person name="Soldo B."/>
            <person name="Rivolta C."/>
            <person name="Reynolds S."/>
            <person name="Mauel C."/>
            <person name="Karamata D."/>
        </authorList>
    </citation>
    <scope>NUCLEOTIDE SEQUENCE [GENOMIC DNA]</scope>
</reference>
<reference key="2">
    <citation type="journal article" date="1997" name="Nature">
        <title>The complete genome sequence of the Gram-positive bacterium Bacillus subtilis.</title>
        <authorList>
            <person name="Kunst F."/>
            <person name="Ogasawara N."/>
            <person name="Moszer I."/>
            <person name="Albertini A.M."/>
            <person name="Alloni G."/>
            <person name="Azevedo V."/>
            <person name="Bertero M.G."/>
            <person name="Bessieres P."/>
            <person name="Bolotin A."/>
            <person name="Borchert S."/>
            <person name="Borriss R."/>
            <person name="Boursier L."/>
            <person name="Brans A."/>
            <person name="Braun M."/>
            <person name="Brignell S.C."/>
            <person name="Bron S."/>
            <person name="Brouillet S."/>
            <person name="Bruschi C.V."/>
            <person name="Caldwell B."/>
            <person name="Capuano V."/>
            <person name="Carter N.M."/>
            <person name="Choi S.-K."/>
            <person name="Codani J.-J."/>
            <person name="Connerton I.F."/>
            <person name="Cummings N.J."/>
            <person name="Daniel R.A."/>
            <person name="Denizot F."/>
            <person name="Devine K.M."/>
            <person name="Duesterhoeft A."/>
            <person name="Ehrlich S.D."/>
            <person name="Emmerson P.T."/>
            <person name="Entian K.-D."/>
            <person name="Errington J."/>
            <person name="Fabret C."/>
            <person name="Ferrari E."/>
            <person name="Foulger D."/>
            <person name="Fritz C."/>
            <person name="Fujita M."/>
            <person name="Fujita Y."/>
            <person name="Fuma S."/>
            <person name="Galizzi A."/>
            <person name="Galleron N."/>
            <person name="Ghim S.-Y."/>
            <person name="Glaser P."/>
            <person name="Goffeau A."/>
            <person name="Golightly E.J."/>
            <person name="Grandi G."/>
            <person name="Guiseppi G."/>
            <person name="Guy B.J."/>
            <person name="Haga K."/>
            <person name="Haiech J."/>
            <person name="Harwood C.R."/>
            <person name="Henaut A."/>
            <person name="Hilbert H."/>
            <person name="Holsappel S."/>
            <person name="Hosono S."/>
            <person name="Hullo M.-F."/>
            <person name="Itaya M."/>
            <person name="Jones L.-M."/>
            <person name="Joris B."/>
            <person name="Karamata D."/>
            <person name="Kasahara Y."/>
            <person name="Klaerr-Blanchard M."/>
            <person name="Klein C."/>
            <person name="Kobayashi Y."/>
            <person name="Koetter P."/>
            <person name="Koningstein G."/>
            <person name="Krogh S."/>
            <person name="Kumano M."/>
            <person name="Kurita K."/>
            <person name="Lapidus A."/>
            <person name="Lardinois S."/>
            <person name="Lauber J."/>
            <person name="Lazarevic V."/>
            <person name="Lee S.-M."/>
            <person name="Levine A."/>
            <person name="Liu H."/>
            <person name="Masuda S."/>
            <person name="Mauel C."/>
            <person name="Medigue C."/>
            <person name="Medina N."/>
            <person name="Mellado R.P."/>
            <person name="Mizuno M."/>
            <person name="Moestl D."/>
            <person name="Nakai S."/>
            <person name="Noback M."/>
            <person name="Noone D."/>
            <person name="O'Reilly M."/>
            <person name="Ogawa K."/>
            <person name="Ogiwara A."/>
            <person name="Oudega B."/>
            <person name="Park S.-H."/>
            <person name="Parro V."/>
            <person name="Pohl T.M."/>
            <person name="Portetelle D."/>
            <person name="Porwollik S."/>
            <person name="Prescott A.M."/>
            <person name="Presecan E."/>
            <person name="Pujic P."/>
            <person name="Purnelle B."/>
            <person name="Rapoport G."/>
            <person name="Rey M."/>
            <person name="Reynolds S."/>
            <person name="Rieger M."/>
            <person name="Rivolta C."/>
            <person name="Rocha E."/>
            <person name="Roche B."/>
            <person name="Rose M."/>
            <person name="Sadaie Y."/>
            <person name="Sato T."/>
            <person name="Scanlan E."/>
            <person name="Schleich S."/>
            <person name="Schroeter R."/>
            <person name="Scoffone F."/>
            <person name="Sekiguchi J."/>
            <person name="Sekowska A."/>
            <person name="Seror S.J."/>
            <person name="Serror P."/>
            <person name="Shin B.-S."/>
            <person name="Soldo B."/>
            <person name="Sorokin A."/>
            <person name="Tacconi E."/>
            <person name="Takagi T."/>
            <person name="Takahashi H."/>
            <person name="Takemaru K."/>
            <person name="Takeuchi M."/>
            <person name="Tamakoshi A."/>
            <person name="Tanaka T."/>
            <person name="Terpstra P."/>
            <person name="Tognoni A."/>
            <person name="Tosato V."/>
            <person name="Uchiyama S."/>
            <person name="Vandenbol M."/>
            <person name="Vannier F."/>
            <person name="Vassarotti A."/>
            <person name="Viari A."/>
            <person name="Wambutt R."/>
            <person name="Wedler E."/>
            <person name="Wedler H."/>
            <person name="Weitzenegger T."/>
            <person name="Winters P."/>
            <person name="Wipat A."/>
            <person name="Yamamoto H."/>
            <person name="Yamane K."/>
            <person name="Yasumoto K."/>
            <person name="Yata K."/>
            <person name="Yoshida K."/>
            <person name="Yoshikawa H.-F."/>
            <person name="Zumstein E."/>
            <person name="Yoshikawa H."/>
            <person name="Danchin A."/>
        </authorList>
    </citation>
    <scope>NUCLEOTIDE SEQUENCE [LARGE SCALE GENOMIC DNA]</scope>
    <source>
        <strain>168</strain>
    </source>
</reference>
<organism>
    <name type="scientific">Bacillus subtilis (strain 168)</name>
    <dbReference type="NCBI Taxonomy" id="224308"/>
    <lineage>
        <taxon>Bacteria</taxon>
        <taxon>Bacillati</taxon>
        <taxon>Bacillota</taxon>
        <taxon>Bacilli</taxon>
        <taxon>Bacillales</taxon>
        <taxon>Bacillaceae</taxon>
        <taxon>Bacillus</taxon>
    </lineage>
</organism>
<protein>
    <recommendedName>
        <fullName>Uncharacterized MFS-type transporter YvkA</fullName>
    </recommendedName>
</protein>
<sequence>MSSRKEWALIVSLLLGAILVPINSTMIAVALSSISHTYNESIASITWVVTVYLIVMAVTQPIAGKLGDMYGNKTMYLWGVGLFLIASLGCALSPSLLLLIVFRALQAVGGALLTPNSIAIIRHVVSEKRLPKVFGFFGLGAGLGAALGPFIGSILIDSFSWHSIFWVNIPFLAIALFTALTMFPQYKENKSDAPLDIIGSLLLAGSIVSIILLTKNEAPWGYTVYSVLILLFVPLFFRREKRTQHPIIDFALFKSSTFTNANLSVLLSNLMMYAVLLIMPLFMTNQFGLNTSNSGMALSVFSIFMSASNWVGAQLHHKWGAKKIIFLSFAMMAGANLLFLLLSSSHSVLFLMLSLILGGLASGVGLTSMQVSSLATVDPGMSGVASGIFSTFRYFGSIISSALIGLISGYHTLFMILFAVSIIGVFVSLGIKSDETARIEKNSA</sequence>
<gene>
    <name type="primary">yvkA</name>
    <name type="ordered locus">BSU35210</name>
</gene>
<accession>O34502</accession>
<accession>Q795D9</accession>
<name>YVKA_BACSU</name>